<sequence>MDFRTLAKRIIMTLLALLILPYLLIPVYALPFIRPVSTLMLADLVTLQGYDRRWVPLEDISPRLVQSVMMSEDGQFCFHGGVDWNQMQSVVSNALDGASTRGASTIPMQTAKNLFLWNGRSFLRKGLELPLAIAADFVWSKKRMMEIYLNVAEWGPGIYGIEAAAQHHFKIPAAKLSSRQAALLAVSLPNPIDRVASKPGRGLQRLAGLIERRARASGGYVGCVLD</sequence>
<comment type="function">
    <text evidence="1">Peptidoglycan polymerase that catalyzes glycan chain elongation from lipid-linked precursors.</text>
</comment>
<comment type="catalytic activity">
    <reaction evidence="1">
        <text>[GlcNAc-(1-&gt;4)-Mur2Ac(oyl-L-Ala-gamma-D-Glu-L-Lys-D-Ala-D-Ala)](n)-di-trans,octa-cis-undecaprenyl diphosphate + beta-D-GlcNAc-(1-&gt;4)-Mur2Ac(oyl-L-Ala-gamma-D-Glu-L-Lys-D-Ala-D-Ala)-di-trans,octa-cis-undecaprenyl diphosphate = [GlcNAc-(1-&gt;4)-Mur2Ac(oyl-L-Ala-gamma-D-Glu-L-Lys-D-Ala-D-Ala)](n+1)-di-trans,octa-cis-undecaprenyl diphosphate + di-trans,octa-cis-undecaprenyl diphosphate + H(+)</text>
        <dbReference type="Rhea" id="RHEA:23708"/>
        <dbReference type="Rhea" id="RHEA-COMP:9602"/>
        <dbReference type="Rhea" id="RHEA-COMP:9603"/>
        <dbReference type="ChEBI" id="CHEBI:15378"/>
        <dbReference type="ChEBI" id="CHEBI:58405"/>
        <dbReference type="ChEBI" id="CHEBI:60033"/>
        <dbReference type="ChEBI" id="CHEBI:78435"/>
        <dbReference type="EC" id="2.4.99.28"/>
    </reaction>
</comment>
<comment type="pathway">
    <text evidence="1">Cell wall biogenesis; peptidoglycan biosynthesis.</text>
</comment>
<comment type="subcellular location">
    <subcellularLocation>
        <location evidence="1">Cell inner membrane</location>
        <topology evidence="1">Single-pass membrane protein</topology>
    </subcellularLocation>
</comment>
<comment type="similarity">
    <text evidence="1">Belongs to the glycosyltransferase 51 family.</text>
</comment>
<comment type="sequence caution" evidence="2">
    <conflict type="erroneous initiation">
        <sequence resource="EMBL-CDS" id="AAK88438"/>
    </conflict>
</comment>
<organism>
    <name type="scientific">Agrobacterium fabrum (strain C58 / ATCC 33970)</name>
    <name type="common">Agrobacterium tumefaciens (strain C58)</name>
    <dbReference type="NCBI Taxonomy" id="176299"/>
    <lineage>
        <taxon>Bacteria</taxon>
        <taxon>Pseudomonadati</taxon>
        <taxon>Pseudomonadota</taxon>
        <taxon>Alphaproteobacteria</taxon>
        <taxon>Hyphomicrobiales</taxon>
        <taxon>Rhizobiaceae</taxon>
        <taxon>Rhizobium/Agrobacterium group</taxon>
        <taxon>Agrobacterium</taxon>
        <taxon>Agrobacterium tumefaciens complex</taxon>
    </lineage>
</organism>
<keyword id="KW-0997">Cell inner membrane</keyword>
<keyword id="KW-1003">Cell membrane</keyword>
<keyword id="KW-0133">Cell shape</keyword>
<keyword id="KW-0961">Cell wall biogenesis/degradation</keyword>
<keyword id="KW-0328">Glycosyltransferase</keyword>
<keyword id="KW-0472">Membrane</keyword>
<keyword id="KW-0573">Peptidoglycan synthesis</keyword>
<keyword id="KW-1185">Reference proteome</keyword>
<keyword id="KW-0808">Transferase</keyword>
<keyword id="KW-0812">Transmembrane</keyword>
<keyword id="KW-1133">Transmembrane helix</keyword>
<name>MTGA_AGRFC</name>
<reference key="1">
    <citation type="journal article" date="2001" name="Science">
        <title>The genome of the natural genetic engineer Agrobacterium tumefaciens C58.</title>
        <authorList>
            <person name="Wood D.W."/>
            <person name="Setubal J.C."/>
            <person name="Kaul R."/>
            <person name="Monks D.E."/>
            <person name="Kitajima J.P."/>
            <person name="Okura V.K."/>
            <person name="Zhou Y."/>
            <person name="Chen L."/>
            <person name="Wood G.E."/>
            <person name="Almeida N.F. Jr."/>
            <person name="Woo L."/>
            <person name="Chen Y."/>
            <person name="Paulsen I.T."/>
            <person name="Eisen J.A."/>
            <person name="Karp P.D."/>
            <person name="Bovee D. Sr."/>
            <person name="Chapman P."/>
            <person name="Clendenning J."/>
            <person name="Deatherage G."/>
            <person name="Gillet W."/>
            <person name="Grant C."/>
            <person name="Kutyavin T."/>
            <person name="Levy R."/>
            <person name="Li M.-J."/>
            <person name="McClelland E."/>
            <person name="Palmieri A."/>
            <person name="Raymond C."/>
            <person name="Rouse G."/>
            <person name="Saenphimmachak C."/>
            <person name="Wu Z."/>
            <person name="Romero P."/>
            <person name="Gordon D."/>
            <person name="Zhang S."/>
            <person name="Yoo H."/>
            <person name="Tao Y."/>
            <person name="Biddle P."/>
            <person name="Jung M."/>
            <person name="Krespan W."/>
            <person name="Perry M."/>
            <person name="Gordon-Kamm B."/>
            <person name="Liao L."/>
            <person name="Kim S."/>
            <person name="Hendrick C."/>
            <person name="Zhao Z.-Y."/>
            <person name="Dolan M."/>
            <person name="Chumley F."/>
            <person name="Tingey S.V."/>
            <person name="Tomb J.-F."/>
            <person name="Gordon M.P."/>
            <person name="Olson M.V."/>
            <person name="Nester E.W."/>
        </authorList>
    </citation>
    <scope>NUCLEOTIDE SEQUENCE [LARGE SCALE GENOMIC DNA]</scope>
    <source>
        <strain>C58 / ATCC 33970</strain>
    </source>
</reference>
<reference key="2">
    <citation type="journal article" date="2001" name="Science">
        <title>Genome sequence of the plant pathogen and biotechnology agent Agrobacterium tumefaciens C58.</title>
        <authorList>
            <person name="Goodner B."/>
            <person name="Hinkle G."/>
            <person name="Gattung S."/>
            <person name="Miller N."/>
            <person name="Blanchard M."/>
            <person name="Qurollo B."/>
            <person name="Goldman B.S."/>
            <person name="Cao Y."/>
            <person name="Askenazi M."/>
            <person name="Halling C."/>
            <person name="Mullin L."/>
            <person name="Houmiel K."/>
            <person name="Gordon J."/>
            <person name="Vaudin M."/>
            <person name="Iartchouk O."/>
            <person name="Epp A."/>
            <person name="Liu F."/>
            <person name="Wollam C."/>
            <person name="Allinger M."/>
            <person name="Doughty D."/>
            <person name="Scott C."/>
            <person name="Lappas C."/>
            <person name="Markelz B."/>
            <person name="Flanagan C."/>
            <person name="Crowell C."/>
            <person name="Gurson J."/>
            <person name="Lomo C."/>
            <person name="Sear C."/>
            <person name="Strub G."/>
            <person name="Cielo C."/>
            <person name="Slater S."/>
        </authorList>
    </citation>
    <scope>NUCLEOTIDE SEQUENCE [LARGE SCALE GENOMIC DNA]</scope>
    <source>
        <strain>C58 / ATCC 33970</strain>
    </source>
</reference>
<dbReference type="EC" id="2.4.99.28" evidence="1"/>
<dbReference type="EMBL" id="AE007869">
    <property type="protein sequence ID" value="AAK88438.2"/>
    <property type="status" value="ALT_INIT"/>
    <property type="molecule type" value="Genomic_DNA"/>
</dbReference>
<dbReference type="PIR" id="AG2910">
    <property type="entry name" value="AG2910"/>
</dbReference>
<dbReference type="PIR" id="E97685">
    <property type="entry name" value="E97685"/>
</dbReference>
<dbReference type="RefSeq" id="NP_355653.2">
    <property type="nucleotide sequence ID" value="NC_003062.2"/>
</dbReference>
<dbReference type="SMR" id="Q8UBX8"/>
<dbReference type="STRING" id="176299.Atu2720"/>
<dbReference type="CAZy" id="GT51">
    <property type="family name" value="Glycosyltransferase Family 51"/>
</dbReference>
<dbReference type="EnsemblBacteria" id="AAK88438">
    <property type="protein sequence ID" value="AAK88438"/>
    <property type="gene ID" value="Atu2720"/>
</dbReference>
<dbReference type="KEGG" id="atu:Atu2720"/>
<dbReference type="PATRIC" id="fig|176299.10.peg.2728"/>
<dbReference type="eggNOG" id="COG0744">
    <property type="taxonomic scope" value="Bacteria"/>
</dbReference>
<dbReference type="HOGENOM" id="CLU_006354_1_1_5"/>
<dbReference type="OrthoDB" id="9766909at2"/>
<dbReference type="UniPathway" id="UPA00219"/>
<dbReference type="Proteomes" id="UP000000813">
    <property type="component" value="Chromosome circular"/>
</dbReference>
<dbReference type="GO" id="GO:0009274">
    <property type="term" value="C:peptidoglycan-based cell wall"/>
    <property type="evidence" value="ECO:0007669"/>
    <property type="project" value="InterPro"/>
</dbReference>
<dbReference type="GO" id="GO:0005886">
    <property type="term" value="C:plasma membrane"/>
    <property type="evidence" value="ECO:0007669"/>
    <property type="project" value="UniProtKB-SubCell"/>
</dbReference>
<dbReference type="GO" id="GO:0016763">
    <property type="term" value="F:pentosyltransferase activity"/>
    <property type="evidence" value="ECO:0007669"/>
    <property type="project" value="InterPro"/>
</dbReference>
<dbReference type="GO" id="GO:0008955">
    <property type="term" value="F:peptidoglycan glycosyltransferase activity"/>
    <property type="evidence" value="ECO:0007669"/>
    <property type="project" value="UniProtKB-UniRule"/>
</dbReference>
<dbReference type="GO" id="GO:0071555">
    <property type="term" value="P:cell wall organization"/>
    <property type="evidence" value="ECO:0007669"/>
    <property type="project" value="UniProtKB-KW"/>
</dbReference>
<dbReference type="GO" id="GO:0009252">
    <property type="term" value="P:peptidoglycan biosynthetic process"/>
    <property type="evidence" value="ECO:0007669"/>
    <property type="project" value="UniProtKB-UniRule"/>
</dbReference>
<dbReference type="GO" id="GO:0008360">
    <property type="term" value="P:regulation of cell shape"/>
    <property type="evidence" value="ECO:0007669"/>
    <property type="project" value="UniProtKB-KW"/>
</dbReference>
<dbReference type="Gene3D" id="1.10.3810.10">
    <property type="entry name" value="Biosynthetic peptidoglycan transglycosylase-like"/>
    <property type="match status" value="1"/>
</dbReference>
<dbReference type="HAMAP" id="MF_00766">
    <property type="entry name" value="PGT_MtgA"/>
    <property type="match status" value="1"/>
</dbReference>
<dbReference type="InterPro" id="IPR001264">
    <property type="entry name" value="Glyco_trans_51"/>
</dbReference>
<dbReference type="InterPro" id="IPR023346">
    <property type="entry name" value="Lysozyme-like_dom_sf"/>
</dbReference>
<dbReference type="InterPro" id="IPR036950">
    <property type="entry name" value="PBP_transglycosylase"/>
</dbReference>
<dbReference type="InterPro" id="IPR011812">
    <property type="entry name" value="Pep_trsgly"/>
</dbReference>
<dbReference type="NCBIfam" id="TIGR02070">
    <property type="entry name" value="mono_pep_trsgly"/>
    <property type="match status" value="1"/>
</dbReference>
<dbReference type="PANTHER" id="PTHR30400:SF0">
    <property type="entry name" value="BIOSYNTHETIC PEPTIDOGLYCAN TRANSGLYCOSYLASE"/>
    <property type="match status" value="1"/>
</dbReference>
<dbReference type="PANTHER" id="PTHR30400">
    <property type="entry name" value="MONOFUNCTIONAL BIOSYNTHETIC PEPTIDOGLYCAN TRANSGLYCOSYLASE"/>
    <property type="match status" value="1"/>
</dbReference>
<dbReference type="Pfam" id="PF00912">
    <property type="entry name" value="Transgly"/>
    <property type="match status" value="1"/>
</dbReference>
<dbReference type="SUPFAM" id="SSF53955">
    <property type="entry name" value="Lysozyme-like"/>
    <property type="match status" value="1"/>
</dbReference>
<feature type="chain" id="PRO_0000083115" description="Biosynthetic peptidoglycan transglycosylase">
    <location>
        <begin position="1"/>
        <end position="226"/>
    </location>
</feature>
<feature type="transmembrane region" description="Helical" evidence="1">
    <location>
        <begin position="10"/>
        <end position="30"/>
    </location>
</feature>
<evidence type="ECO:0000255" key="1">
    <source>
        <dbReference type="HAMAP-Rule" id="MF_00766"/>
    </source>
</evidence>
<evidence type="ECO:0000305" key="2"/>
<protein>
    <recommendedName>
        <fullName evidence="1">Biosynthetic peptidoglycan transglycosylase</fullName>
        <ecNumber evidence="1">2.4.99.28</ecNumber>
    </recommendedName>
    <alternativeName>
        <fullName evidence="1">Glycan polymerase</fullName>
    </alternativeName>
    <alternativeName>
        <fullName evidence="1">Peptidoglycan glycosyltransferase MtgA</fullName>
        <shortName evidence="1">PGT</shortName>
    </alternativeName>
</protein>
<proteinExistence type="inferred from homology"/>
<gene>
    <name evidence="1" type="primary">mtgA</name>
    <name type="ordered locus">Atu2720</name>
    <name type="ORF">AGR_C_4930</name>
</gene>
<accession>Q8UBX8</accession>